<dbReference type="EC" id="2.7.7.77" evidence="1"/>
<dbReference type="EMBL" id="CP000255">
    <property type="protein sequence ID" value="ABD22364.1"/>
    <property type="molecule type" value="Genomic_DNA"/>
</dbReference>
<dbReference type="RefSeq" id="WP_000643988.1">
    <property type="nucleotide sequence ID" value="NZ_CP027476.1"/>
</dbReference>
<dbReference type="SMR" id="Q2FEM3"/>
<dbReference type="KEGG" id="saa:SAUSA300_2220"/>
<dbReference type="HOGENOM" id="CLU_055597_2_0_9"/>
<dbReference type="OMA" id="YFEPLFC"/>
<dbReference type="Proteomes" id="UP000001939">
    <property type="component" value="Chromosome"/>
</dbReference>
<dbReference type="GO" id="GO:0005737">
    <property type="term" value="C:cytoplasm"/>
    <property type="evidence" value="ECO:0007669"/>
    <property type="project" value="UniProtKB-SubCell"/>
</dbReference>
<dbReference type="GO" id="GO:0005525">
    <property type="term" value="F:GTP binding"/>
    <property type="evidence" value="ECO:0007669"/>
    <property type="project" value="UniProtKB-UniRule"/>
</dbReference>
<dbReference type="GO" id="GO:0046872">
    <property type="term" value="F:metal ion binding"/>
    <property type="evidence" value="ECO:0007669"/>
    <property type="project" value="UniProtKB-KW"/>
</dbReference>
<dbReference type="GO" id="GO:0061603">
    <property type="term" value="F:molybdenum cofactor guanylyltransferase activity"/>
    <property type="evidence" value="ECO:0007669"/>
    <property type="project" value="UniProtKB-EC"/>
</dbReference>
<dbReference type="GO" id="GO:0006777">
    <property type="term" value="P:Mo-molybdopterin cofactor biosynthetic process"/>
    <property type="evidence" value="ECO:0007669"/>
    <property type="project" value="UniProtKB-KW"/>
</dbReference>
<dbReference type="CDD" id="cd02503">
    <property type="entry name" value="MobA"/>
    <property type="match status" value="1"/>
</dbReference>
<dbReference type="Gene3D" id="3.90.550.10">
    <property type="entry name" value="Spore Coat Polysaccharide Biosynthesis Protein SpsA, Chain A"/>
    <property type="match status" value="1"/>
</dbReference>
<dbReference type="HAMAP" id="MF_00316">
    <property type="entry name" value="MobA"/>
    <property type="match status" value="1"/>
</dbReference>
<dbReference type="InterPro" id="IPR025877">
    <property type="entry name" value="MobA-like_NTP_Trfase"/>
</dbReference>
<dbReference type="InterPro" id="IPR013482">
    <property type="entry name" value="Molybde_CF_guanTrfase"/>
</dbReference>
<dbReference type="InterPro" id="IPR029044">
    <property type="entry name" value="Nucleotide-diphossugar_trans"/>
</dbReference>
<dbReference type="NCBIfam" id="NF001457">
    <property type="entry name" value="PRK00317.1-3"/>
    <property type="match status" value="1"/>
</dbReference>
<dbReference type="PANTHER" id="PTHR19136">
    <property type="entry name" value="MOLYBDENUM COFACTOR GUANYLYLTRANSFERASE"/>
    <property type="match status" value="1"/>
</dbReference>
<dbReference type="PANTHER" id="PTHR19136:SF81">
    <property type="entry name" value="MOLYBDENUM COFACTOR GUANYLYLTRANSFERASE"/>
    <property type="match status" value="1"/>
</dbReference>
<dbReference type="Pfam" id="PF12804">
    <property type="entry name" value="NTP_transf_3"/>
    <property type="match status" value="1"/>
</dbReference>
<dbReference type="SUPFAM" id="SSF53448">
    <property type="entry name" value="Nucleotide-diphospho-sugar transferases"/>
    <property type="match status" value="1"/>
</dbReference>
<evidence type="ECO:0000255" key="1">
    <source>
        <dbReference type="HAMAP-Rule" id="MF_00316"/>
    </source>
</evidence>
<keyword id="KW-0963">Cytoplasm</keyword>
<keyword id="KW-0342">GTP-binding</keyword>
<keyword id="KW-0460">Magnesium</keyword>
<keyword id="KW-0479">Metal-binding</keyword>
<keyword id="KW-0501">Molybdenum cofactor biosynthesis</keyword>
<keyword id="KW-0547">Nucleotide-binding</keyword>
<keyword id="KW-0808">Transferase</keyword>
<comment type="function">
    <text evidence="1">Transfers a GMP moiety from GTP to Mo-molybdopterin (Mo-MPT) cofactor (Moco or molybdenum cofactor) to form Mo-molybdopterin guanine dinucleotide (Mo-MGD) cofactor.</text>
</comment>
<comment type="catalytic activity">
    <reaction evidence="1">
        <text>Mo-molybdopterin + GTP + H(+) = Mo-molybdopterin guanine dinucleotide + diphosphate</text>
        <dbReference type="Rhea" id="RHEA:34243"/>
        <dbReference type="ChEBI" id="CHEBI:15378"/>
        <dbReference type="ChEBI" id="CHEBI:33019"/>
        <dbReference type="ChEBI" id="CHEBI:37565"/>
        <dbReference type="ChEBI" id="CHEBI:71302"/>
        <dbReference type="ChEBI" id="CHEBI:71310"/>
        <dbReference type="EC" id="2.7.7.77"/>
    </reaction>
</comment>
<comment type="cofactor">
    <cofactor evidence="1">
        <name>Mg(2+)</name>
        <dbReference type="ChEBI" id="CHEBI:18420"/>
    </cofactor>
</comment>
<comment type="subcellular location">
    <subcellularLocation>
        <location evidence="1">Cytoplasm</location>
    </subcellularLocation>
</comment>
<comment type="domain">
    <text evidence="1">The N-terminal domain determines nucleotide recognition and specific binding, while the C-terminal domain determines the specific binding to the target protein.</text>
</comment>
<comment type="similarity">
    <text evidence="1">Belongs to the MobA family.</text>
</comment>
<name>MOBA_STAA3</name>
<feature type="chain" id="PRO_1000019156" description="Probable molybdenum cofactor guanylyltransferase">
    <location>
        <begin position="1"/>
        <end position="199"/>
    </location>
</feature>
<feature type="binding site" evidence="1">
    <location>
        <begin position="6"/>
        <end position="8"/>
    </location>
    <ligand>
        <name>GTP</name>
        <dbReference type="ChEBI" id="CHEBI:37565"/>
    </ligand>
</feature>
<feature type="binding site" evidence="1">
    <location>
        <position position="18"/>
    </location>
    <ligand>
        <name>GTP</name>
        <dbReference type="ChEBI" id="CHEBI:37565"/>
    </ligand>
</feature>
<feature type="binding site" evidence="1">
    <location>
        <position position="65"/>
    </location>
    <ligand>
        <name>GTP</name>
        <dbReference type="ChEBI" id="CHEBI:37565"/>
    </ligand>
</feature>
<feature type="binding site" evidence="1">
    <location>
        <position position="97"/>
    </location>
    <ligand>
        <name>GTP</name>
        <dbReference type="ChEBI" id="CHEBI:37565"/>
    </ligand>
</feature>
<feature type="binding site" evidence="1">
    <location>
        <position position="97"/>
    </location>
    <ligand>
        <name>Mg(2+)</name>
        <dbReference type="ChEBI" id="CHEBI:18420"/>
    </ligand>
</feature>
<reference key="1">
    <citation type="journal article" date="2006" name="Lancet">
        <title>Complete genome sequence of USA300, an epidemic clone of community-acquired meticillin-resistant Staphylococcus aureus.</title>
        <authorList>
            <person name="Diep B.A."/>
            <person name="Gill S.R."/>
            <person name="Chang R.F."/>
            <person name="Phan T.H."/>
            <person name="Chen J.H."/>
            <person name="Davidson M.G."/>
            <person name="Lin F."/>
            <person name="Lin J."/>
            <person name="Carleton H.A."/>
            <person name="Mongodin E.F."/>
            <person name="Sensabaugh G.F."/>
            <person name="Perdreau-Remington F."/>
        </authorList>
    </citation>
    <scope>NUCLEOTIDE SEQUENCE [LARGE SCALE GENOMIC DNA]</scope>
    <source>
        <strain>USA300</strain>
    </source>
</reference>
<proteinExistence type="inferred from homology"/>
<protein>
    <recommendedName>
        <fullName evidence="1">Probable molybdenum cofactor guanylyltransferase</fullName>
        <shortName evidence="1">MoCo guanylyltransferase</shortName>
        <ecNumber evidence="1">2.7.7.77</ecNumber>
    </recommendedName>
    <alternativeName>
        <fullName evidence="1">GTP:molybdopterin guanylyltransferase</fullName>
    </alternativeName>
    <alternativeName>
        <fullName evidence="1">Mo-MPT guanylyltransferase</fullName>
    </alternativeName>
    <alternativeName>
        <fullName evidence="1">Molybdopterin guanylyltransferase</fullName>
    </alternativeName>
    <alternativeName>
        <fullName evidence="1">Molybdopterin-guanine dinucleotide synthase</fullName>
        <shortName evidence="1">MGD synthase</shortName>
    </alternativeName>
</protein>
<accession>Q2FEM3</accession>
<gene>
    <name evidence="1" type="primary">mobA</name>
    <name type="ordered locus">SAUSA300_2220</name>
</gene>
<sequence length="199" mass="22542">MKAIILAGGHSVRFGKPKAFAEVNGETFYSRVIKTLESTNMFNEIIISTNAQLATQFKYPNVVIDDENHNDKGPLAGIYTIMKQHPEEELFFVVSVDTPMITGKAVSTLYQFLVSHLIENHLDVAAFKEDGRFIPTIAFYSPNALGAITKALHSDNYSFKNVYHELSTDYLDVRDVDAPSYWYKNINYQHDLDALIQKL</sequence>
<organism>
    <name type="scientific">Staphylococcus aureus (strain USA300)</name>
    <dbReference type="NCBI Taxonomy" id="367830"/>
    <lineage>
        <taxon>Bacteria</taxon>
        <taxon>Bacillati</taxon>
        <taxon>Bacillota</taxon>
        <taxon>Bacilli</taxon>
        <taxon>Bacillales</taxon>
        <taxon>Staphylococcaceae</taxon>
        <taxon>Staphylococcus</taxon>
    </lineage>
</organism>